<proteinExistence type="inferred from homology"/>
<evidence type="ECO:0000250" key="1">
    <source>
        <dbReference type="UniProtKB" id="P03609"/>
    </source>
</evidence>
<evidence type="ECO:0000255" key="2"/>
<evidence type="ECO:0000305" key="3"/>
<organismHost>
    <name type="scientific">Escherichia coli</name>
    <dbReference type="NCBI Taxonomy" id="562"/>
</organismHost>
<organism>
    <name type="scientific">Enterobacteria phage JP34</name>
    <name type="common">Bacteriophage JP34</name>
    <dbReference type="NCBI Taxonomy" id="12019"/>
    <lineage>
        <taxon>Viruses</taxon>
        <taxon>Riboviria</taxon>
        <taxon>Orthornavirae</taxon>
        <taxon>Lenarviricota</taxon>
        <taxon>Leviviricetes</taxon>
        <taxon>Norzivirales</taxon>
        <taxon>Fiersviridae</taxon>
        <taxon>Emesvirus</taxon>
        <taxon>Escherichia phage BZ13</taxon>
    </lineage>
</organism>
<comment type="function">
    <text evidence="1">Induces the formation of specific membrane adhesion sites between the inner and outer membranes, apparently leading to host cell lysis. Lysis may be performed via activation of host murein hydrolases.</text>
</comment>
<comment type="subcellular location">
    <subcellularLocation>
        <location evidence="1">Host cell inner membrane</location>
        <topology evidence="2">Single-pass membrane protein</topology>
    </subcellularLocation>
    <subcellularLocation>
        <location evidence="1">Host cell outer membrane</location>
        <topology evidence="2">Single-pass membrane protein</topology>
    </subcellularLocation>
</comment>
<comment type="similarity">
    <text evidence="3">Belongs to the Leviviricetes lysis protein family.</text>
</comment>
<feature type="chain" id="PRO_0000164863" description="Lysis protein">
    <location>
        <begin position="1"/>
        <end position="63"/>
    </location>
</feature>
<feature type="transmembrane region" description="Helical" evidence="2">
    <location>
        <begin position="21"/>
        <end position="43"/>
    </location>
</feature>
<dbReference type="EMBL" id="J04343">
    <property type="protein sequence ID" value="AAA72211.1"/>
    <property type="molecule type" value="Genomic_RNA"/>
</dbReference>
<dbReference type="PIR" id="B46324">
    <property type="entry name" value="B46324"/>
</dbReference>
<dbReference type="SMR" id="P34702"/>
<dbReference type="GO" id="GO:0020002">
    <property type="term" value="C:host cell plasma membrane"/>
    <property type="evidence" value="ECO:0007669"/>
    <property type="project" value="UniProtKB-SubCell"/>
</dbReference>
<dbReference type="GO" id="GO:0016020">
    <property type="term" value="C:membrane"/>
    <property type="evidence" value="ECO:0007669"/>
    <property type="project" value="UniProtKB-KW"/>
</dbReference>
<dbReference type="GO" id="GO:0031640">
    <property type="term" value="P:killing of cells of another organism"/>
    <property type="evidence" value="ECO:0007669"/>
    <property type="project" value="UniProtKB-KW"/>
</dbReference>
<dbReference type="InterPro" id="IPR022599">
    <property type="entry name" value="Phage_MS2_lysis"/>
</dbReference>
<dbReference type="Pfam" id="PF11125">
    <property type="entry name" value="Phage_MS2_lysis"/>
    <property type="match status" value="1"/>
</dbReference>
<sequence>MGLKAKHKENLCSDSQRSKRLYVWIALAIVLSDFTSIFSHWIWGLLILILRTLMDLPTFVMNV</sequence>
<name>LYS_BPJP3</name>
<keyword id="KW-0204">Cytolysis</keyword>
<keyword id="KW-1030">Host cell inner membrane</keyword>
<keyword id="KW-0578">Host cell lysis by virus</keyword>
<keyword id="KW-1032">Host cell membrane</keyword>
<keyword id="KW-1033">Host cell outer membrane</keyword>
<keyword id="KW-1043">Host membrane</keyword>
<keyword id="KW-0472">Membrane</keyword>
<keyword id="KW-0812">Transmembrane</keyword>
<keyword id="KW-1133">Transmembrane helix</keyword>
<keyword id="KW-1188">Viral release from host cell</keyword>
<reference key="1">
    <citation type="journal article" date="1989" name="Virology">
        <title>Nucleotide sequence from the ssRNA bacteriophage JP34 resolves the discrepancy between serological and biophysical classification.</title>
        <authorList>
            <person name="Adhin M.R."/>
            <person name="Hirashima A."/>
            <person name="van Duin J."/>
        </authorList>
    </citation>
    <scope>NUCLEOTIDE SEQUENCE [GENOMIC RNA]</scope>
</reference>
<protein>
    <recommendedName>
        <fullName>Lysis protein</fullName>
    </recommendedName>
</protein>
<accession>P34702</accession>